<evidence type="ECO:0000250" key="1">
    <source>
        <dbReference type="UniProtKB" id="A9XFX6"/>
    </source>
</evidence>
<evidence type="ECO:0000250" key="2">
    <source>
        <dbReference type="UniProtKB" id="P47756"/>
    </source>
</evidence>
<evidence type="ECO:0000255" key="3"/>
<evidence type="ECO:0000269" key="4">
    <source>
    </source>
</evidence>
<evidence type="ECO:0000305" key="5"/>
<evidence type="ECO:0007744" key="6">
    <source>
    </source>
</evidence>
<proteinExistence type="evidence at protein level"/>
<organism>
    <name type="scientific">Rattus norvegicus</name>
    <name type="common">Rat</name>
    <dbReference type="NCBI Taxonomy" id="10116"/>
    <lineage>
        <taxon>Eukaryota</taxon>
        <taxon>Metazoa</taxon>
        <taxon>Chordata</taxon>
        <taxon>Craniata</taxon>
        <taxon>Vertebrata</taxon>
        <taxon>Euteleostomi</taxon>
        <taxon>Mammalia</taxon>
        <taxon>Eutheria</taxon>
        <taxon>Euarchontoglires</taxon>
        <taxon>Glires</taxon>
        <taxon>Rodentia</taxon>
        <taxon>Myomorpha</taxon>
        <taxon>Muroidea</taxon>
        <taxon>Muridae</taxon>
        <taxon>Murinae</taxon>
        <taxon>Rattus</taxon>
    </lineage>
</organism>
<reference key="1">
    <citation type="journal article" date="2004" name="Genome Res.">
        <title>The status, quality, and expansion of the NIH full-length cDNA project: the Mammalian Gene Collection (MGC).</title>
        <authorList>
            <consortium name="The MGC Project Team"/>
        </authorList>
    </citation>
    <scope>NUCLEOTIDE SEQUENCE [LARGE SCALE MRNA]</scope>
    <source>
        <tissue>Kidney</tissue>
    </source>
</reference>
<reference key="2">
    <citation type="submission" date="2007-04" db="UniProtKB">
        <authorList>
            <person name="Lubec G."/>
            <person name="Chen W.-Q."/>
        </authorList>
    </citation>
    <scope>PROTEIN SEQUENCE OF 95-108</scope>
    <scope>IDENTIFICATION BY MASS SPECTROMETRY</scope>
    <source>
        <strain>Sprague-Dawley</strain>
        <tissue>Hippocampus</tissue>
    </source>
</reference>
<reference key="3">
    <citation type="journal article" date="2009" name="Proteomics">
        <title>Proteome profile of the mature rat olfactory bulb.</title>
        <authorList>
            <person name="Maurya D.K."/>
            <person name="Sundaram C.S."/>
            <person name="Bhargava P."/>
        </authorList>
    </citation>
    <scope>IDENTIFICATION BY MASS SPECTROMETRY</scope>
    <scope>SUBCELLULAR LOCATION</scope>
</reference>
<reference key="4">
    <citation type="journal article" date="2012" name="Nat. Commun.">
        <title>Quantitative maps of protein phosphorylation sites across 14 different rat organs and tissues.</title>
        <authorList>
            <person name="Lundby A."/>
            <person name="Secher A."/>
            <person name="Lage K."/>
            <person name="Nordsborg N.B."/>
            <person name="Dmytriyev A."/>
            <person name="Lundby C."/>
            <person name="Olsen J.V."/>
        </authorList>
    </citation>
    <scope>PHOSPHORYLATION [LARGE SCALE ANALYSIS] AT SER-2</scope>
    <scope>IDENTIFICATION BY MASS SPECTROMETRY [LARGE SCALE ANALYSIS]</scope>
</reference>
<sequence length="272" mass="30629">MSDQQLDCALDLMRRLPPQQIEKNLSDLIDLVPSLCEDLLSSVDQPLKIARDKVVGKDYLLCDYNRDGDSYRSPWSNKYDPPLEDGAMPSARLRKLEVEANNAFDQYRDLYFEGGVSSVYLWDLDHGFAGVILIKKAGDGSKKIKGCWDSIHVVEVQEKSSGRTAHYKLTSTVMLWLQTNKSGSGTMNLGGSLTRQMEKDETVSDCSPHIANIGRLVEDMENKIRSTLNEIYFGKTKDIVNGLRSVQTFADKSKQEALKNDLVEALKRKQQC</sequence>
<gene>
    <name type="primary">Capzb</name>
</gene>
<feature type="initiator methionine" description="Removed" evidence="2">
    <location>
        <position position="1"/>
    </location>
</feature>
<feature type="chain" id="PRO_0000289720" description="F-actin-capping protein subunit beta">
    <location>
        <begin position="2"/>
        <end position="272"/>
    </location>
</feature>
<feature type="coiled-coil region" evidence="3">
    <location>
        <begin position="210"/>
        <end position="272"/>
    </location>
</feature>
<feature type="modified residue" description="N-acetylserine" evidence="2">
    <location>
        <position position="2"/>
    </location>
</feature>
<feature type="modified residue" description="Phosphoserine" evidence="6">
    <location>
        <position position="2"/>
    </location>
</feature>
<feature type="modified residue" description="N6-acetyllysine" evidence="2">
    <location>
        <position position="235"/>
    </location>
</feature>
<comment type="function">
    <text evidence="1 2">F-actin-capping proteins bind in a Ca(2+)-independent manner to the fast growing ends of actin filaments (barbed end) thereby blocking the exchange of subunits at these ends. Unlike other capping proteins (such as gelsolin and severin), these proteins do not sever actin filaments. Plays a role in the regulation of cell morphology and cytoskeletal organization (By similarity). Forms, with CAPZB, the barbed end of the fast growing ends of actin filaments in the dynactin complex and stabilizes dynactin structure. The dynactin multiprotein complex activates the molecular motor dynein for ultra-processive transport along microtubules (By similarity).</text>
</comment>
<comment type="subunit">
    <text evidence="1 2">Component of the F-actin capping complex, composed of a heterodimer of an alpha and a beta subunit. Subunit of dynactin, a multiprotein complex part of a tripartite complex with dynein and a adapter, such as BICDL1, BICD2 or HOOK3. The dynactin complex is built around ACTR1A/ACTB filament and consists of an actin-related filament composed of a shoulder domain, a pointed end and a barbed end. Its length is defined by its flexible shoulder domain. The soulder is composed of 2 DCTN1 subunits, 4 DCTN2 and 2 DCTN3. The 4 DCNT2 (via N-terminus) bind the ACTR1A filament and act as molecular rulers to determine the length. The pointed end is important for binding dynein-dynactin cargo adapters. Consists of 4 subunits: ACTR10, DCNT4, DCTN5 and DCTN6. The barbed end is composed of a CAPZA1:CAPZB heterodimers, which binds ACTR1A/ACTB filament and dynactin and stabilizes dynactin (By similarity). Interacts with ARHGAP17. Interaction with RCSD1/CAPZIP. Component of the WASH complex, composed of F-actin-capping protein subunit alpha (CAPZA1, CAPZA2 or CAPZA3), F-actin-capping protein subunit beta (CAPZB), WASH (WASHC1, WASH2P, WASH3P, WASH4P, WASH5P or WASH6P), WASHC2 (WASHC2A or WASHC2C), WASHC3, WASHC4 and WASHC5. Interacts with ACTG1. Directly interacts with CRACD; this interaction decreases binding to actin (By similarity).</text>
</comment>
<comment type="interaction">
    <interactant intactId="EBI-2128068">
        <id>Q5XI32</id>
    </interactant>
    <interactant intactId="EBI-2128047">
        <id>P62775</id>
        <label>Mtpn</label>
    </interactant>
    <organismsDiffer>false</organismsDiffer>
    <experiments>3</experiments>
</comment>
<comment type="subcellular location">
    <subcellularLocation>
        <location evidence="4">Cytoplasm</location>
        <location evidence="4">Cytoskeleton</location>
    </subcellularLocation>
    <subcellularLocation>
        <location evidence="5">Cytoplasm</location>
        <location evidence="5">Myofibril</location>
        <location evidence="5">Sarcomere</location>
    </subcellularLocation>
</comment>
<comment type="similarity">
    <text evidence="5">Belongs to the F-actin-capping protein beta subunit family.</text>
</comment>
<name>CAPZB_RAT</name>
<protein>
    <recommendedName>
        <fullName>F-actin-capping protein subunit beta</fullName>
    </recommendedName>
    <alternativeName>
        <fullName>CapZ beta</fullName>
    </alternativeName>
</protein>
<dbReference type="EMBL" id="BC083861">
    <property type="protein sequence ID" value="AAH83861.1"/>
    <property type="molecule type" value="mRNA"/>
</dbReference>
<dbReference type="RefSeq" id="NP_001005903.1">
    <property type="nucleotide sequence ID" value="NM_001005903.1"/>
</dbReference>
<dbReference type="BMRB" id="Q5XI32"/>
<dbReference type="SMR" id="Q5XI32"/>
<dbReference type="BioGRID" id="255949">
    <property type="interactions" value="7"/>
</dbReference>
<dbReference type="FunCoup" id="Q5XI32">
    <property type="interactions" value="3251"/>
</dbReference>
<dbReference type="IntAct" id="Q5XI32">
    <property type="interactions" value="4"/>
</dbReference>
<dbReference type="MINT" id="Q5XI32"/>
<dbReference type="STRING" id="10116.ENSRNOP00000070586"/>
<dbReference type="GlyGen" id="Q5XI32">
    <property type="glycosylation" value="1 site, 1 O-linked glycan (1 site)"/>
</dbReference>
<dbReference type="iPTMnet" id="Q5XI32"/>
<dbReference type="PhosphoSitePlus" id="Q5XI32"/>
<dbReference type="jPOST" id="Q5XI32"/>
<dbReference type="PaxDb" id="10116-ENSRNOP00000010308"/>
<dbReference type="GeneID" id="298584"/>
<dbReference type="KEGG" id="rno:298584"/>
<dbReference type="UCSC" id="RGD:1359099">
    <property type="organism name" value="rat"/>
</dbReference>
<dbReference type="AGR" id="RGD:1359099"/>
<dbReference type="CTD" id="832"/>
<dbReference type="RGD" id="1359099">
    <property type="gene designation" value="Capzb"/>
</dbReference>
<dbReference type="VEuPathDB" id="HostDB:ENSRNOG00000007330"/>
<dbReference type="eggNOG" id="KOG3174">
    <property type="taxonomic scope" value="Eukaryota"/>
</dbReference>
<dbReference type="HOGENOM" id="CLU_045864_1_1_1"/>
<dbReference type="InParanoid" id="Q5XI32"/>
<dbReference type="OrthoDB" id="9979678at2759"/>
<dbReference type="Reactome" id="R-RNO-2132295">
    <property type="pathway name" value="MHC class II antigen presentation"/>
</dbReference>
<dbReference type="Reactome" id="R-RNO-3371497">
    <property type="pathway name" value="HSP90 chaperone cycle for steroid hormone receptors (SHR) in the presence of ligand"/>
</dbReference>
<dbReference type="Reactome" id="R-RNO-6807878">
    <property type="pathway name" value="COPI-mediated anterograde transport"/>
</dbReference>
<dbReference type="Reactome" id="R-RNO-6811436">
    <property type="pathway name" value="COPI-independent Golgi-to-ER retrograde traffic"/>
</dbReference>
<dbReference type="Reactome" id="R-RNO-9013405">
    <property type="pathway name" value="RHOD GTPase cycle"/>
</dbReference>
<dbReference type="Reactome" id="R-RNO-9035034">
    <property type="pathway name" value="RHOF GTPase cycle"/>
</dbReference>
<dbReference type="Reactome" id="R-RNO-983231">
    <property type="pathway name" value="Factors involved in megakaryocyte development and platelet production"/>
</dbReference>
<dbReference type="PRO" id="PR:Q5XI32"/>
<dbReference type="Proteomes" id="UP000002494">
    <property type="component" value="Chromosome 5"/>
</dbReference>
<dbReference type="Bgee" id="ENSRNOG00000007330">
    <property type="expression patterns" value="Expressed in testis and 19 other cell types or tissues"/>
</dbReference>
<dbReference type="ExpressionAtlas" id="Q5XI32">
    <property type="expression patterns" value="baseline and differential"/>
</dbReference>
<dbReference type="GO" id="GO:0032279">
    <property type="term" value="C:asymmetric synapse"/>
    <property type="evidence" value="ECO:0000266"/>
    <property type="project" value="RGD"/>
</dbReference>
<dbReference type="GO" id="GO:0005903">
    <property type="term" value="C:brush border"/>
    <property type="evidence" value="ECO:0000266"/>
    <property type="project" value="RGD"/>
</dbReference>
<dbReference type="GO" id="GO:0030863">
    <property type="term" value="C:cortical cytoskeleton"/>
    <property type="evidence" value="ECO:0000266"/>
    <property type="project" value="RGD"/>
</dbReference>
<dbReference type="GO" id="GO:0043197">
    <property type="term" value="C:dendritic spine"/>
    <property type="evidence" value="ECO:0000314"/>
    <property type="project" value="RGD"/>
</dbReference>
<dbReference type="GO" id="GO:0008290">
    <property type="term" value="C:F-actin capping protein complex"/>
    <property type="evidence" value="ECO:0000318"/>
    <property type="project" value="GO_Central"/>
</dbReference>
<dbReference type="GO" id="GO:0098686">
    <property type="term" value="C:hippocampal mossy fiber to CA3 synapse"/>
    <property type="evidence" value="ECO:0000266"/>
    <property type="project" value="RGD"/>
</dbReference>
<dbReference type="GO" id="GO:0030027">
    <property type="term" value="C:lamellipodium"/>
    <property type="evidence" value="ECO:0000266"/>
    <property type="project" value="RGD"/>
</dbReference>
<dbReference type="GO" id="GO:0016020">
    <property type="term" value="C:membrane"/>
    <property type="evidence" value="ECO:0000266"/>
    <property type="project" value="RGD"/>
</dbReference>
<dbReference type="GO" id="GO:0043025">
    <property type="term" value="C:neuronal cell body"/>
    <property type="evidence" value="ECO:0000314"/>
    <property type="project" value="RGD"/>
</dbReference>
<dbReference type="GO" id="GO:0014069">
    <property type="term" value="C:postsynaptic density"/>
    <property type="evidence" value="ECO:0000266"/>
    <property type="project" value="RGD"/>
</dbReference>
<dbReference type="GO" id="GO:0030017">
    <property type="term" value="C:sarcomere"/>
    <property type="evidence" value="ECO:0007669"/>
    <property type="project" value="UniProtKB-SubCell"/>
</dbReference>
<dbReference type="GO" id="GO:0098685">
    <property type="term" value="C:Schaffer collateral - CA1 synapse"/>
    <property type="evidence" value="ECO:0000266"/>
    <property type="project" value="RGD"/>
</dbReference>
<dbReference type="GO" id="GO:0120212">
    <property type="term" value="C:sperm head-tail coupling apparatus"/>
    <property type="evidence" value="ECO:0000266"/>
    <property type="project" value="RGD"/>
</dbReference>
<dbReference type="GO" id="GO:0071203">
    <property type="term" value="C:WASH complex"/>
    <property type="evidence" value="ECO:0000250"/>
    <property type="project" value="UniProtKB"/>
</dbReference>
<dbReference type="GO" id="GO:0003779">
    <property type="term" value="F:actin binding"/>
    <property type="evidence" value="ECO:0000250"/>
    <property type="project" value="UniProtKB"/>
</dbReference>
<dbReference type="GO" id="GO:0051015">
    <property type="term" value="F:actin filament binding"/>
    <property type="evidence" value="ECO:0000318"/>
    <property type="project" value="GO_Central"/>
</dbReference>
<dbReference type="GO" id="GO:0008154">
    <property type="term" value="P:actin polymerization or depolymerization"/>
    <property type="evidence" value="ECO:0000266"/>
    <property type="project" value="RGD"/>
</dbReference>
<dbReference type="GO" id="GO:0051016">
    <property type="term" value="P:barbed-end actin filament capping"/>
    <property type="evidence" value="ECO:0000318"/>
    <property type="project" value="GO_Central"/>
</dbReference>
<dbReference type="GO" id="GO:0000902">
    <property type="term" value="P:cell morphogenesis"/>
    <property type="evidence" value="ECO:0000318"/>
    <property type="project" value="GO_Central"/>
</dbReference>
<dbReference type="GO" id="GO:0030030">
    <property type="term" value="P:cell projection organization"/>
    <property type="evidence" value="ECO:0000266"/>
    <property type="project" value="RGD"/>
</dbReference>
<dbReference type="GO" id="GO:0007010">
    <property type="term" value="P:cytoskeleton organization"/>
    <property type="evidence" value="ECO:0000250"/>
    <property type="project" value="UniProtKB"/>
</dbReference>
<dbReference type="GO" id="GO:0030032">
    <property type="term" value="P:lamellipodium assembly"/>
    <property type="evidence" value="ECO:0000266"/>
    <property type="project" value="RGD"/>
</dbReference>
<dbReference type="GO" id="GO:0051490">
    <property type="term" value="P:negative regulation of filopodium assembly"/>
    <property type="evidence" value="ECO:0000318"/>
    <property type="project" value="GO_Central"/>
</dbReference>
<dbReference type="GO" id="GO:0022604">
    <property type="term" value="P:regulation of cell morphogenesis"/>
    <property type="evidence" value="ECO:0000250"/>
    <property type="project" value="UniProtKB"/>
</dbReference>
<dbReference type="GO" id="GO:0010591">
    <property type="term" value="P:regulation of lamellipodium assembly"/>
    <property type="evidence" value="ECO:0000318"/>
    <property type="project" value="GO_Central"/>
</dbReference>
<dbReference type="FunFam" id="1.20.58.570:FF:000001">
    <property type="entry name" value="F-actin-capping protein subunit beta"/>
    <property type="match status" value="1"/>
</dbReference>
<dbReference type="FunFam" id="3.90.1150.210:FF:000001">
    <property type="entry name" value="F-actin-capping protein subunit beta"/>
    <property type="match status" value="1"/>
</dbReference>
<dbReference type="Gene3D" id="1.20.58.570">
    <property type="match status" value="1"/>
</dbReference>
<dbReference type="Gene3D" id="3.90.1150.210">
    <property type="entry name" value="F-actin capping protein, beta subunit"/>
    <property type="match status" value="1"/>
</dbReference>
<dbReference type="InterPro" id="IPR037282">
    <property type="entry name" value="CapZ_alpha/beta"/>
</dbReference>
<dbReference type="InterPro" id="IPR042276">
    <property type="entry name" value="CapZ_alpha/beta_2"/>
</dbReference>
<dbReference type="InterPro" id="IPR001698">
    <property type="entry name" value="CAPZB"/>
</dbReference>
<dbReference type="InterPro" id="IPR043175">
    <property type="entry name" value="CAPZB_N"/>
</dbReference>
<dbReference type="InterPro" id="IPR019771">
    <property type="entry name" value="F-actin_capping_bsu_CS"/>
</dbReference>
<dbReference type="PANTHER" id="PTHR10619">
    <property type="entry name" value="F-ACTIN-CAPPING PROTEIN SUBUNIT BETA"/>
    <property type="match status" value="1"/>
</dbReference>
<dbReference type="PANTHER" id="PTHR10619:SF1">
    <property type="entry name" value="F-ACTIN-CAPPING PROTEIN SUBUNIT BETA"/>
    <property type="match status" value="1"/>
</dbReference>
<dbReference type="Pfam" id="PF01115">
    <property type="entry name" value="F_actin_cap_B"/>
    <property type="match status" value="1"/>
</dbReference>
<dbReference type="PRINTS" id="PR00192">
    <property type="entry name" value="FACTINCAPB"/>
</dbReference>
<dbReference type="SUPFAM" id="SSF90096">
    <property type="entry name" value="Subunits of heterodimeric actin filament capping protein Capz"/>
    <property type="match status" value="1"/>
</dbReference>
<dbReference type="PROSITE" id="PS00231">
    <property type="entry name" value="F_ACTIN_CAPPING_BETA"/>
    <property type="match status" value="1"/>
</dbReference>
<accession>Q5XI32</accession>
<keyword id="KW-0007">Acetylation</keyword>
<keyword id="KW-0117">Actin capping</keyword>
<keyword id="KW-0009">Actin-binding</keyword>
<keyword id="KW-0175">Coiled coil</keyword>
<keyword id="KW-0963">Cytoplasm</keyword>
<keyword id="KW-0206">Cytoskeleton</keyword>
<keyword id="KW-0903">Direct protein sequencing</keyword>
<keyword id="KW-0597">Phosphoprotein</keyword>
<keyword id="KW-1185">Reference proteome</keyword>